<sequence length="56" mass="6411">MSLRPCLTPSSMQYSDIYIHHTHTPHPHHTHTHTHHTPTHSLTSTFTLAVTPYPAF</sequence>
<evidence type="ECO:0000256" key="1">
    <source>
        <dbReference type="SAM" id="MobiDB-lite"/>
    </source>
</evidence>
<gene>
    <name type="ordered locus">YLL066W-B</name>
</gene>
<reference key="1">
    <citation type="journal article" date="1997" name="Nature">
        <title>The nucleotide sequence of Saccharomyces cerevisiae chromosome XII.</title>
        <authorList>
            <person name="Johnston M."/>
            <person name="Hillier L.W."/>
            <person name="Riles L."/>
            <person name="Albermann K."/>
            <person name="Andre B."/>
            <person name="Ansorge W."/>
            <person name="Benes V."/>
            <person name="Brueckner M."/>
            <person name="Delius H."/>
            <person name="Dubois E."/>
            <person name="Duesterhoeft A."/>
            <person name="Entian K.-D."/>
            <person name="Floeth M."/>
            <person name="Goffeau A."/>
            <person name="Hebling U."/>
            <person name="Heumann K."/>
            <person name="Heuss-Neitzel D."/>
            <person name="Hilbert H."/>
            <person name="Hilger F."/>
            <person name="Kleine K."/>
            <person name="Koetter P."/>
            <person name="Louis E.J."/>
            <person name="Messenguy F."/>
            <person name="Mewes H.-W."/>
            <person name="Miosga T."/>
            <person name="Moestl D."/>
            <person name="Mueller-Auer S."/>
            <person name="Nentwich U."/>
            <person name="Obermaier B."/>
            <person name="Piravandi E."/>
            <person name="Pohl T.M."/>
            <person name="Portetelle D."/>
            <person name="Purnelle B."/>
            <person name="Rechmann S."/>
            <person name="Rieger M."/>
            <person name="Rinke M."/>
            <person name="Rose M."/>
            <person name="Scharfe M."/>
            <person name="Scherens B."/>
            <person name="Scholler P."/>
            <person name="Schwager C."/>
            <person name="Schwarz S."/>
            <person name="Underwood A.P."/>
            <person name="Urrestarazu L.A."/>
            <person name="Vandenbol M."/>
            <person name="Verhasselt P."/>
            <person name="Vierendeels F."/>
            <person name="Voet M."/>
            <person name="Volckaert G."/>
            <person name="Voss H."/>
            <person name="Wambutt R."/>
            <person name="Wedler E."/>
            <person name="Wedler H."/>
            <person name="Zimmermann F.K."/>
            <person name="Zollner A."/>
            <person name="Hani J."/>
            <person name="Hoheisel J.D."/>
        </authorList>
    </citation>
    <scope>NUCLEOTIDE SEQUENCE [LARGE SCALE GENOMIC DNA]</scope>
    <source>
        <strain>ATCC 204508 / S288c</strain>
    </source>
</reference>
<reference key="2">
    <citation type="journal article" date="2014" name="G3 (Bethesda)">
        <title>The reference genome sequence of Saccharomyces cerevisiae: Then and now.</title>
        <authorList>
            <person name="Engel S.R."/>
            <person name="Dietrich F.S."/>
            <person name="Fisk D.G."/>
            <person name="Binkley G."/>
            <person name="Balakrishnan R."/>
            <person name="Costanzo M.C."/>
            <person name="Dwight S.S."/>
            <person name="Hitz B.C."/>
            <person name="Karra K."/>
            <person name="Nash R.S."/>
            <person name="Weng S."/>
            <person name="Wong E.D."/>
            <person name="Lloyd P."/>
            <person name="Skrzypek M.S."/>
            <person name="Miyasato S.R."/>
            <person name="Simison M."/>
            <person name="Cherry J.M."/>
        </authorList>
    </citation>
    <scope>GENOME REANNOTATION</scope>
    <source>
        <strain>ATCC 204508 / S288c</strain>
    </source>
</reference>
<reference key="3">
    <citation type="journal article" date="2002" name="Nat. Biotechnol.">
        <title>An integrated approach for finding overlooked genes in yeast.</title>
        <authorList>
            <person name="Kumar A."/>
            <person name="Harrison P.M."/>
            <person name="Cheung K.-H."/>
            <person name="Lan N."/>
            <person name="Echols N."/>
            <person name="Bertone P."/>
            <person name="Miller P."/>
            <person name="Gerstein M.B."/>
            <person name="Snyder M."/>
        </authorList>
    </citation>
    <scope>NUCLEOTIDE SEQUENCE [GENOMIC DNA]</scope>
</reference>
<organism>
    <name type="scientific">Saccharomyces cerevisiae (strain ATCC 204508 / S288c)</name>
    <name type="common">Baker's yeast</name>
    <dbReference type="NCBI Taxonomy" id="559292"/>
    <lineage>
        <taxon>Eukaryota</taxon>
        <taxon>Fungi</taxon>
        <taxon>Dikarya</taxon>
        <taxon>Ascomycota</taxon>
        <taxon>Saccharomycotina</taxon>
        <taxon>Saccharomycetes</taxon>
        <taxon>Saccharomycetales</taxon>
        <taxon>Saccharomycetaceae</taxon>
        <taxon>Saccharomyces</taxon>
    </lineage>
</organism>
<keyword id="KW-1185">Reference proteome</keyword>
<protein>
    <recommendedName>
        <fullName>Uncharacterized protein YLL066W-B</fullName>
    </recommendedName>
</protein>
<dbReference type="EMBL" id="Z47973">
    <property type="status" value="NOT_ANNOTATED_CDS"/>
    <property type="molecule type" value="Genomic_DNA"/>
</dbReference>
<dbReference type="EMBL" id="Z73171">
    <property type="status" value="NOT_ANNOTATED_CDS"/>
    <property type="molecule type" value="Genomic_DNA"/>
</dbReference>
<dbReference type="EMBL" id="Z73172">
    <property type="status" value="NOT_ANNOTATED_CDS"/>
    <property type="molecule type" value="Genomic_DNA"/>
</dbReference>
<dbReference type="EMBL" id="AF480006">
    <property type="protein sequence ID" value="AAL79319.1"/>
    <property type="molecule type" value="Genomic_DNA"/>
</dbReference>
<dbReference type="EMBL" id="BK006945">
    <property type="protein sequence ID" value="DAA09259.1"/>
    <property type="molecule type" value="Genomic_DNA"/>
</dbReference>
<dbReference type="RefSeq" id="NP_878115.1">
    <property type="nucleotide sequence ID" value="NM_001184605.1"/>
</dbReference>
<dbReference type="BioGRID" id="36950">
    <property type="interactions" value="69"/>
</dbReference>
<dbReference type="FunCoup" id="Q8TGJ7">
    <property type="interactions" value="12"/>
</dbReference>
<dbReference type="STRING" id="4932.YLL066W-B"/>
<dbReference type="PaxDb" id="4932-YLL066W-B"/>
<dbReference type="EnsemblFungi" id="YLL066W-B_mRNA">
    <property type="protein sequence ID" value="YLL066W-B"/>
    <property type="gene ID" value="YLL066W-B"/>
</dbReference>
<dbReference type="GeneID" id="1466404"/>
<dbReference type="KEGG" id="sce:YLL066W-B"/>
<dbReference type="AGR" id="SGD:S000028672"/>
<dbReference type="SGD" id="S000028672">
    <property type="gene designation" value="YLL066W-B"/>
</dbReference>
<dbReference type="VEuPathDB" id="FungiDB:YLL066W-B"/>
<dbReference type="GeneTree" id="ENSGT00940000182173"/>
<dbReference type="HOGENOM" id="CLU_212309_0_0_1"/>
<dbReference type="InParanoid" id="Q8TGJ7"/>
<dbReference type="BioCyc" id="YEAST:G3O-32584-MONOMER"/>
<dbReference type="BioGRID-ORCS" id="1466404">
    <property type="hits" value="0 hits in 10 CRISPR screens"/>
</dbReference>
<dbReference type="PRO" id="PR:Q8TGJ7"/>
<dbReference type="Proteomes" id="UP000002311">
    <property type="component" value="Chromosome XII"/>
</dbReference>
<dbReference type="RNAct" id="Q8TGJ7">
    <property type="molecule type" value="protein"/>
</dbReference>
<proteinExistence type="predicted"/>
<name>YL66B_YEAST</name>
<accession>Q8TGJ7</accession>
<accession>D6VXU3</accession>
<feature type="chain" id="PRO_0000247154" description="Uncharacterized protein YLL066W-B">
    <location>
        <begin position="1"/>
        <end position="56"/>
    </location>
</feature>
<feature type="region of interest" description="Disordered" evidence="1">
    <location>
        <begin position="21"/>
        <end position="40"/>
    </location>
</feature>
<feature type="compositionally biased region" description="Basic residues" evidence="1">
    <location>
        <begin position="21"/>
        <end position="38"/>
    </location>
</feature>